<reference key="1">
    <citation type="journal article" date="2011" name="J. Bacteriol.">
        <title>Genome of Ochrobactrum anthropi ATCC 49188 T, a versatile opportunistic pathogen and symbiont of several eukaryotic hosts.</title>
        <authorList>
            <person name="Chain P.S."/>
            <person name="Lang D.M."/>
            <person name="Comerci D.J."/>
            <person name="Malfatti S.A."/>
            <person name="Vergez L.M."/>
            <person name="Shin M."/>
            <person name="Ugalde R.A."/>
            <person name="Garcia E."/>
            <person name="Tolmasky M.E."/>
        </authorList>
    </citation>
    <scope>NUCLEOTIDE SEQUENCE [LARGE SCALE GENOMIC DNA]</scope>
    <source>
        <strain>ATCC 49188 / DSM 6882 / CCUG 24695 / JCM 21032 / LMG 3331 / NBRC 15819 / NCTC 12168 / Alc 37</strain>
    </source>
</reference>
<comment type="function">
    <text evidence="1">NDH-1 shuttles electrons from NADH, via FMN and iron-sulfur (Fe-S) centers, to quinones in the respiratory chain. The immediate electron acceptor for the enzyme in this species is believed to be ubiquinone. Couples the redox reaction to proton translocation (for every two electrons transferred, four hydrogen ions are translocated across the cytoplasmic membrane), and thus conserves the redox energy in a proton gradient.</text>
</comment>
<comment type="catalytic activity">
    <reaction evidence="1">
        <text>a quinone + NADH + 5 H(+)(in) = a quinol + NAD(+) + 4 H(+)(out)</text>
        <dbReference type="Rhea" id="RHEA:57888"/>
        <dbReference type="ChEBI" id="CHEBI:15378"/>
        <dbReference type="ChEBI" id="CHEBI:24646"/>
        <dbReference type="ChEBI" id="CHEBI:57540"/>
        <dbReference type="ChEBI" id="CHEBI:57945"/>
        <dbReference type="ChEBI" id="CHEBI:132124"/>
    </reaction>
</comment>
<comment type="cofactor">
    <cofactor evidence="1">
        <name>[4Fe-4S] cluster</name>
        <dbReference type="ChEBI" id="CHEBI:49883"/>
    </cofactor>
    <text evidence="1">Binds 2 [4Fe-4S] clusters per subunit.</text>
</comment>
<comment type="subunit">
    <text evidence="1">NDH-1 is composed of 14 different subunits. Subunits NuoA, H, J, K, L, M, N constitute the membrane sector of the complex.</text>
</comment>
<comment type="subcellular location">
    <subcellularLocation>
        <location evidence="1">Cell inner membrane</location>
        <topology evidence="1">Peripheral membrane protein</topology>
    </subcellularLocation>
</comment>
<comment type="similarity">
    <text evidence="1">Belongs to the complex I 23 kDa subunit family.</text>
</comment>
<dbReference type="EC" id="7.1.1.-" evidence="1"/>
<dbReference type="EMBL" id="CP000758">
    <property type="protein sequence ID" value="ABS15129.1"/>
    <property type="molecule type" value="Genomic_DNA"/>
</dbReference>
<dbReference type="RefSeq" id="WP_007874549.1">
    <property type="nucleotide sequence ID" value="NC_009667.1"/>
</dbReference>
<dbReference type="SMR" id="A6X1M5"/>
<dbReference type="STRING" id="439375.Oant_2415"/>
<dbReference type="GeneID" id="93109043"/>
<dbReference type="KEGG" id="oan:Oant_2415"/>
<dbReference type="eggNOG" id="COG1143">
    <property type="taxonomic scope" value="Bacteria"/>
</dbReference>
<dbReference type="HOGENOM" id="CLU_067218_5_1_5"/>
<dbReference type="PhylomeDB" id="A6X1M5"/>
<dbReference type="Proteomes" id="UP000002301">
    <property type="component" value="Chromosome 1"/>
</dbReference>
<dbReference type="GO" id="GO:0005886">
    <property type="term" value="C:plasma membrane"/>
    <property type="evidence" value="ECO:0007669"/>
    <property type="project" value="UniProtKB-SubCell"/>
</dbReference>
<dbReference type="GO" id="GO:0051539">
    <property type="term" value="F:4 iron, 4 sulfur cluster binding"/>
    <property type="evidence" value="ECO:0007669"/>
    <property type="project" value="UniProtKB-KW"/>
</dbReference>
<dbReference type="GO" id="GO:0005506">
    <property type="term" value="F:iron ion binding"/>
    <property type="evidence" value="ECO:0007669"/>
    <property type="project" value="UniProtKB-UniRule"/>
</dbReference>
<dbReference type="GO" id="GO:0050136">
    <property type="term" value="F:NADH:ubiquinone reductase (non-electrogenic) activity"/>
    <property type="evidence" value="ECO:0007669"/>
    <property type="project" value="UniProtKB-UniRule"/>
</dbReference>
<dbReference type="GO" id="GO:0048038">
    <property type="term" value="F:quinone binding"/>
    <property type="evidence" value="ECO:0007669"/>
    <property type="project" value="UniProtKB-KW"/>
</dbReference>
<dbReference type="GO" id="GO:0009060">
    <property type="term" value="P:aerobic respiration"/>
    <property type="evidence" value="ECO:0007669"/>
    <property type="project" value="TreeGrafter"/>
</dbReference>
<dbReference type="FunFam" id="3.30.70.3270:FF:000001">
    <property type="entry name" value="NADH-quinone oxidoreductase subunit I 1"/>
    <property type="match status" value="1"/>
</dbReference>
<dbReference type="Gene3D" id="3.30.70.3270">
    <property type="match status" value="1"/>
</dbReference>
<dbReference type="HAMAP" id="MF_01351">
    <property type="entry name" value="NDH1_NuoI"/>
    <property type="match status" value="1"/>
</dbReference>
<dbReference type="InterPro" id="IPR017896">
    <property type="entry name" value="4Fe4S_Fe-S-bd"/>
</dbReference>
<dbReference type="InterPro" id="IPR017900">
    <property type="entry name" value="4Fe4S_Fe_S_CS"/>
</dbReference>
<dbReference type="InterPro" id="IPR010226">
    <property type="entry name" value="NADH_quinone_OxRdtase_chainI"/>
</dbReference>
<dbReference type="NCBIfam" id="TIGR01971">
    <property type="entry name" value="NuoI"/>
    <property type="match status" value="1"/>
</dbReference>
<dbReference type="NCBIfam" id="NF004538">
    <property type="entry name" value="PRK05888.1-4"/>
    <property type="match status" value="1"/>
</dbReference>
<dbReference type="NCBIfam" id="NF004539">
    <property type="entry name" value="PRK05888.1-5"/>
    <property type="match status" value="1"/>
</dbReference>
<dbReference type="PANTHER" id="PTHR10849:SF20">
    <property type="entry name" value="NADH DEHYDROGENASE [UBIQUINONE] IRON-SULFUR PROTEIN 8, MITOCHONDRIAL"/>
    <property type="match status" value="1"/>
</dbReference>
<dbReference type="PANTHER" id="PTHR10849">
    <property type="entry name" value="NADH DEHYDROGENASE UBIQUINONE IRON-SULFUR PROTEIN 8, MITOCHONDRIAL"/>
    <property type="match status" value="1"/>
</dbReference>
<dbReference type="Pfam" id="PF12838">
    <property type="entry name" value="Fer4_7"/>
    <property type="match status" value="1"/>
</dbReference>
<dbReference type="SUPFAM" id="SSF54862">
    <property type="entry name" value="4Fe-4S ferredoxins"/>
    <property type="match status" value="1"/>
</dbReference>
<dbReference type="PROSITE" id="PS00198">
    <property type="entry name" value="4FE4S_FER_1"/>
    <property type="match status" value="2"/>
</dbReference>
<dbReference type="PROSITE" id="PS51379">
    <property type="entry name" value="4FE4S_FER_2"/>
    <property type="match status" value="2"/>
</dbReference>
<keyword id="KW-0004">4Fe-4S</keyword>
<keyword id="KW-0997">Cell inner membrane</keyword>
<keyword id="KW-1003">Cell membrane</keyword>
<keyword id="KW-0408">Iron</keyword>
<keyword id="KW-0411">Iron-sulfur</keyword>
<keyword id="KW-0472">Membrane</keyword>
<keyword id="KW-0479">Metal-binding</keyword>
<keyword id="KW-0520">NAD</keyword>
<keyword id="KW-0874">Quinone</keyword>
<keyword id="KW-1185">Reference proteome</keyword>
<keyword id="KW-0677">Repeat</keyword>
<keyword id="KW-1278">Translocase</keyword>
<keyword id="KW-0830">Ubiquinone</keyword>
<gene>
    <name evidence="1" type="primary">nuoI</name>
    <name type="ordered locus">Oant_2415</name>
</gene>
<name>NUOI_BRUA4</name>
<accession>A6X1M5</accession>
<organism>
    <name type="scientific">Brucella anthropi (strain ATCC 49188 / DSM 6882 / CCUG 24695 / JCM 21032 / LMG 3331 / NBRC 15819 / NCTC 12168 / Alc 37)</name>
    <name type="common">Ochrobactrum anthropi</name>
    <dbReference type="NCBI Taxonomy" id="439375"/>
    <lineage>
        <taxon>Bacteria</taxon>
        <taxon>Pseudomonadati</taxon>
        <taxon>Pseudomonadota</taxon>
        <taxon>Alphaproteobacteria</taxon>
        <taxon>Hyphomicrobiales</taxon>
        <taxon>Brucellaceae</taxon>
        <taxon>Brucella/Ochrobactrum group</taxon>
        <taxon>Brucella</taxon>
    </lineage>
</organism>
<evidence type="ECO:0000255" key="1">
    <source>
        <dbReference type="HAMAP-Rule" id="MF_01351"/>
    </source>
</evidence>
<proteinExistence type="inferred from homology"/>
<feature type="chain" id="PRO_1000067770" description="NADH-quinone oxidoreductase subunit I">
    <location>
        <begin position="1"/>
        <end position="163"/>
    </location>
</feature>
<feature type="domain" description="4Fe-4S ferredoxin-type 1" evidence="1">
    <location>
        <begin position="53"/>
        <end position="83"/>
    </location>
</feature>
<feature type="domain" description="4Fe-4S ferredoxin-type 2" evidence="1">
    <location>
        <begin position="94"/>
        <end position="123"/>
    </location>
</feature>
<feature type="binding site" evidence="1">
    <location>
        <position position="63"/>
    </location>
    <ligand>
        <name>[4Fe-4S] cluster</name>
        <dbReference type="ChEBI" id="CHEBI:49883"/>
        <label>1</label>
    </ligand>
</feature>
<feature type="binding site" evidence="1">
    <location>
        <position position="66"/>
    </location>
    <ligand>
        <name>[4Fe-4S] cluster</name>
        <dbReference type="ChEBI" id="CHEBI:49883"/>
        <label>1</label>
    </ligand>
</feature>
<feature type="binding site" evidence="1">
    <location>
        <position position="69"/>
    </location>
    <ligand>
        <name>[4Fe-4S] cluster</name>
        <dbReference type="ChEBI" id="CHEBI:49883"/>
        <label>1</label>
    </ligand>
</feature>
<feature type="binding site" evidence="1">
    <location>
        <position position="73"/>
    </location>
    <ligand>
        <name>[4Fe-4S] cluster</name>
        <dbReference type="ChEBI" id="CHEBI:49883"/>
        <label>2</label>
    </ligand>
</feature>
<feature type="binding site" evidence="1">
    <location>
        <position position="103"/>
    </location>
    <ligand>
        <name>[4Fe-4S] cluster</name>
        <dbReference type="ChEBI" id="CHEBI:49883"/>
        <label>2</label>
    </ligand>
</feature>
<feature type="binding site" evidence="1">
    <location>
        <position position="106"/>
    </location>
    <ligand>
        <name>[4Fe-4S] cluster</name>
        <dbReference type="ChEBI" id="CHEBI:49883"/>
        <label>2</label>
    </ligand>
</feature>
<feature type="binding site" evidence="1">
    <location>
        <position position="109"/>
    </location>
    <ligand>
        <name>[4Fe-4S] cluster</name>
        <dbReference type="ChEBI" id="CHEBI:49883"/>
        <label>2</label>
    </ligand>
</feature>
<feature type="binding site" evidence="1">
    <location>
        <position position="113"/>
    </location>
    <ligand>
        <name>[4Fe-4S] cluster</name>
        <dbReference type="ChEBI" id="CHEBI:49883"/>
        <label>1</label>
    </ligand>
</feature>
<protein>
    <recommendedName>
        <fullName evidence="1">NADH-quinone oxidoreductase subunit I</fullName>
        <ecNumber evidence="1">7.1.1.-</ecNumber>
    </recommendedName>
    <alternativeName>
        <fullName evidence="1">NADH dehydrogenase I subunit I</fullName>
    </alternativeName>
    <alternativeName>
        <fullName evidence="1">NDH-1 subunit I</fullName>
    </alternativeName>
</protein>
<sequence>MASFAQAAKSLLLKEFVGAFFLSMRQFFAPKATLNYPHEKGPVSPRFRGEHALRRYPNGEERCIACKLCEAICPAQAITIEAGPRRNDGTRRTVRYDIDMVKCIYCGFCQEACPVDAIVEGPNFEFATETREELYYDKDKLLANGDRWEREIARNIAMDAPYR</sequence>